<protein>
    <recommendedName>
        <fullName>RNA-binding protein 3</fullName>
    </recommendedName>
    <alternativeName>
        <fullName>RNA-binding motif protein 3</fullName>
    </alternativeName>
</protein>
<reference key="1">
    <citation type="journal article" date="2000" name="Am. J. Pathol.">
        <title>Decreased expression of mouse Rbm3, a cold-shock protein, in Sertoli cells of cryptorchid testis.</title>
        <authorList>
            <person name="Danno S."/>
            <person name="Itoh K."/>
            <person name="Matsuda T."/>
            <person name="Fujita J."/>
        </authorList>
    </citation>
    <scope>NUCLEOTIDE SEQUENCE [MRNA]</scope>
</reference>
<reference key="2">
    <citation type="journal article" date="2001" name="J. Biol. Chem.">
        <title>A 5' leader of Rbm3, a cold stress-induced mRNA, mediates internal initiation of translation with increased efficiency under conditions of mild hypothermia.</title>
        <authorList>
            <person name="Chappell S.A."/>
            <person name="Owens G.C."/>
            <person name="Mauro V.P."/>
        </authorList>
    </citation>
    <scope>NUCLEOTIDE SEQUENCE [MRNA]</scope>
    <source>
        <strain>ICR</strain>
    </source>
</reference>
<reference key="3">
    <citation type="journal article" date="2004" name="Genome Res.">
        <title>The status, quality, and expansion of the NIH full-length cDNA project: the Mammalian Gene Collection (MGC).</title>
        <authorList>
            <consortium name="The MGC Project Team"/>
        </authorList>
    </citation>
    <scope>NUCLEOTIDE SEQUENCE [LARGE SCALE MRNA]</scope>
    <source>
        <strain>Czech II</strain>
        <tissue>Mammary gland</tissue>
    </source>
</reference>
<reference key="4">
    <citation type="journal article" date="2005" name="Proc. Natl. Acad. Sci. U.S.A.">
        <title>Cold stress-induced protein Rbm3 binds 60S ribosomal subunits, alters microRNA levels, and enhances global protein synthesis.</title>
        <authorList>
            <person name="Dresios J."/>
            <person name="Aschrafi A."/>
            <person name="Owens G.C."/>
            <person name="Vanderklish P.W."/>
            <person name="Edelman G.M."/>
            <person name="Mauro V.P."/>
        </authorList>
    </citation>
    <scope>FUNCTION</scope>
    <scope>ASSOCIATION WITH RIBOSOMES</scope>
</reference>
<reference key="5">
    <citation type="journal article" date="2010" name="Cell">
        <title>A tissue-specific atlas of mouse protein phosphorylation and expression.</title>
        <authorList>
            <person name="Huttlin E.L."/>
            <person name="Jedrychowski M.P."/>
            <person name="Elias J.E."/>
            <person name="Goswami T."/>
            <person name="Rad R."/>
            <person name="Beausoleil S.A."/>
            <person name="Villen J."/>
            <person name="Haas W."/>
            <person name="Sowa M.E."/>
            <person name="Gygi S.P."/>
        </authorList>
    </citation>
    <scope>PHOSPHORYLATION [LARGE SCALE ANALYSIS] AT SER-133</scope>
    <scope>IDENTIFICATION BY MASS SPECTROMETRY [LARGE SCALE ANALYSIS]</scope>
    <source>
        <tissue>Brain</tissue>
        <tissue>Brown adipose tissue</tissue>
        <tissue>Heart</tissue>
        <tissue>Kidney</tissue>
        <tissue>Liver</tissue>
        <tissue>Lung</tissue>
        <tissue>Pancreas</tissue>
        <tissue>Spleen</tissue>
        <tissue>Testis</tissue>
    </source>
</reference>
<reference key="6">
    <citation type="journal article" date="2014" name="Mol. Cell. Proteomics">
        <title>Immunoaffinity enrichment and mass spectrometry analysis of protein methylation.</title>
        <authorList>
            <person name="Guo A."/>
            <person name="Gu H."/>
            <person name="Zhou J."/>
            <person name="Mulhern D."/>
            <person name="Wang Y."/>
            <person name="Lee K.A."/>
            <person name="Yang V."/>
            <person name="Aguiar M."/>
            <person name="Kornhauser J."/>
            <person name="Jia X."/>
            <person name="Ren J."/>
            <person name="Beausoleil S.A."/>
            <person name="Silva J.C."/>
            <person name="Vemulapalli V."/>
            <person name="Bedford M.T."/>
            <person name="Comb M.J."/>
        </authorList>
    </citation>
    <scope>METHYLATION [LARGE SCALE ANALYSIS] AT ARG-47; ARG-103; ARG-118 AND ARG-128</scope>
    <scope>IDENTIFICATION BY MASS SPECTROMETRY [LARGE SCALE ANALYSIS]</scope>
    <source>
        <tissue>Brain</tissue>
        <tissue>Embryo</tissue>
    </source>
</reference>
<feature type="chain" id="PRO_0000081753" description="RNA-binding protein 3">
    <location>
        <begin position="1"/>
        <end position="153"/>
    </location>
</feature>
<feature type="domain" description="RRM" evidence="3">
    <location>
        <begin position="6"/>
        <end position="84"/>
    </location>
</feature>
<feature type="region of interest" description="Disordered" evidence="4">
    <location>
        <begin position="81"/>
        <end position="153"/>
    </location>
</feature>
<feature type="compositionally biased region" description="Gly residues" evidence="4">
    <location>
        <begin position="89"/>
        <end position="112"/>
    </location>
</feature>
<feature type="modified residue" description="Omega-N-methylarginine" evidence="7">
    <location>
        <position position="47"/>
    </location>
</feature>
<feature type="modified residue" description="Asymmetric dimethylarginine; alternate" evidence="7">
    <location>
        <position position="103"/>
    </location>
</feature>
<feature type="modified residue" description="Dimethylated arginine; alternate" evidence="2">
    <location>
        <position position="103"/>
    </location>
</feature>
<feature type="modified residue" description="Omega-N-methylarginine; alternate" evidence="7">
    <location>
        <position position="103"/>
    </location>
</feature>
<feature type="modified residue" description="Omega-N-methylarginine" evidence="7">
    <location>
        <position position="118"/>
    </location>
</feature>
<feature type="modified residue" description="Omega-N-methylarginine" evidence="7">
    <location>
        <position position="128"/>
    </location>
</feature>
<feature type="modified residue" description="Phosphoserine" evidence="6">
    <location>
        <position position="133"/>
    </location>
</feature>
<feature type="modified residue" description="Phosphoserine" evidence="2">
    <location>
        <position position="143"/>
    </location>
</feature>
<feature type="modified residue" description="Phosphotyrosine" evidence="2">
    <location>
        <position position="151"/>
    </location>
</feature>
<accession>O89086</accession>
<dbReference type="EMBL" id="AB016424">
    <property type="protein sequence ID" value="BAA32060.1"/>
    <property type="molecule type" value="mRNA"/>
</dbReference>
<dbReference type="EMBL" id="AY052560">
    <property type="protein sequence ID" value="AAL10707.1"/>
    <property type="molecule type" value="mRNA"/>
</dbReference>
<dbReference type="EMBL" id="BC006580">
    <property type="protein sequence ID" value="AAH06580.1"/>
    <property type="molecule type" value="mRNA"/>
</dbReference>
<dbReference type="CCDS" id="CCDS52988.1"/>
<dbReference type="RefSeq" id="NP_001159882.1">
    <property type="nucleotide sequence ID" value="NM_001166410.2"/>
</dbReference>
<dbReference type="RefSeq" id="NP_001159883.1">
    <property type="nucleotide sequence ID" value="NM_001166411.2"/>
</dbReference>
<dbReference type="SMR" id="O89086"/>
<dbReference type="BioGRID" id="202821">
    <property type="interactions" value="13"/>
</dbReference>
<dbReference type="FunCoup" id="O89086">
    <property type="interactions" value="3136"/>
</dbReference>
<dbReference type="IntAct" id="O89086">
    <property type="interactions" value="4"/>
</dbReference>
<dbReference type="MINT" id="O89086"/>
<dbReference type="STRING" id="10090.ENSMUSP00000038964"/>
<dbReference type="GlyGen" id="O89086">
    <property type="glycosylation" value="1 site, 1 O-linked glycan (1 site)"/>
</dbReference>
<dbReference type="iPTMnet" id="O89086"/>
<dbReference type="PhosphoSitePlus" id="O89086"/>
<dbReference type="REPRODUCTION-2DPAGE" id="IPI00130883"/>
<dbReference type="jPOST" id="O89086"/>
<dbReference type="PaxDb" id="10090-ENSMUSP00000038964"/>
<dbReference type="PeptideAtlas" id="O89086"/>
<dbReference type="ProteomicsDB" id="300267"/>
<dbReference type="Pumba" id="O89086"/>
<dbReference type="DNASU" id="19652"/>
<dbReference type="Ensembl" id="ENSMUST00000115615.9">
    <property type="protein sequence ID" value="ENSMUSP00000111277.3"/>
    <property type="gene ID" value="ENSMUSG00000031167.17"/>
</dbReference>
<dbReference type="Ensembl" id="ENSMUST00000115619.8">
    <property type="protein sequence ID" value="ENSMUSP00000111282.2"/>
    <property type="gene ID" value="ENSMUSG00000031167.17"/>
</dbReference>
<dbReference type="Ensembl" id="ENSMUST00000115621.9">
    <property type="protein sequence ID" value="ENSMUSP00000111284.3"/>
    <property type="gene ID" value="ENSMUSG00000031167.17"/>
</dbReference>
<dbReference type="GeneID" id="19652"/>
<dbReference type="KEGG" id="mmu:19652"/>
<dbReference type="UCSC" id="uc009sob.3">
    <property type="organism name" value="mouse"/>
</dbReference>
<dbReference type="AGR" id="MGI:1099460"/>
<dbReference type="CTD" id="5935"/>
<dbReference type="MGI" id="MGI:1099460">
    <property type="gene designation" value="Rbm3"/>
</dbReference>
<dbReference type="VEuPathDB" id="HostDB:ENSMUSG00000031167"/>
<dbReference type="eggNOG" id="KOG0118">
    <property type="taxonomic scope" value="Eukaryota"/>
</dbReference>
<dbReference type="GeneTree" id="ENSGT00940000153524"/>
<dbReference type="HOGENOM" id="CLU_012062_28_1_1"/>
<dbReference type="InParanoid" id="O89086"/>
<dbReference type="OrthoDB" id="4207594at2759"/>
<dbReference type="PhylomeDB" id="O89086"/>
<dbReference type="BioGRID-ORCS" id="19652">
    <property type="hits" value="2 hits in 79 CRISPR screens"/>
</dbReference>
<dbReference type="CD-CODE" id="764D0258">
    <property type="entry name" value="Neuronal RNP granule"/>
</dbReference>
<dbReference type="ChiTaRS" id="Rbm3">
    <property type="organism name" value="mouse"/>
</dbReference>
<dbReference type="PRO" id="PR:O89086"/>
<dbReference type="Proteomes" id="UP000000589">
    <property type="component" value="Chromosome X"/>
</dbReference>
<dbReference type="RNAct" id="O89086">
    <property type="molecule type" value="protein"/>
</dbReference>
<dbReference type="Bgee" id="ENSMUSG00000031167">
    <property type="expression patterns" value="Expressed in ventricular zone and 218 other cell types or tissues"/>
</dbReference>
<dbReference type="ExpressionAtlas" id="O89086">
    <property type="expression patterns" value="baseline and differential"/>
</dbReference>
<dbReference type="GO" id="GO:0005737">
    <property type="term" value="C:cytoplasm"/>
    <property type="evidence" value="ECO:0000250"/>
    <property type="project" value="UniProtKB"/>
</dbReference>
<dbReference type="GO" id="GO:0030425">
    <property type="term" value="C:dendrite"/>
    <property type="evidence" value="ECO:0000250"/>
    <property type="project" value="UniProtKB"/>
</dbReference>
<dbReference type="GO" id="GO:0005634">
    <property type="term" value="C:nucleus"/>
    <property type="evidence" value="ECO:0000250"/>
    <property type="project" value="UniProtKB"/>
</dbReference>
<dbReference type="GO" id="GO:0043023">
    <property type="term" value="F:ribosomal large subunit binding"/>
    <property type="evidence" value="ECO:0000353"/>
    <property type="project" value="MGI"/>
</dbReference>
<dbReference type="GO" id="GO:0003723">
    <property type="term" value="F:RNA binding"/>
    <property type="evidence" value="ECO:0007669"/>
    <property type="project" value="UniProtKB-KW"/>
</dbReference>
<dbReference type="GO" id="GO:0035196">
    <property type="term" value="P:miRNA processing"/>
    <property type="evidence" value="ECO:0000314"/>
    <property type="project" value="MGI"/>
</dbReference>
<dbReference type="GO" id="GO:0045727">
    <property type="term" value="P:positive regulation of translation"/>
    <property type="evidence" value="ECO:0000250"/>
    <property type="project" value="UniProtKB"/>
</dbReference>
<dbReference type="GO" id="GO:0006417">
    <property type="term" value="P:regulation of translation"/>
    <property type="evidence" value="ECO:0000314"/>
    <property type="project" value="UniProtKB"/>
</dbReference>
<dbReference type="GO" id="GO:0009409">
    <property type="term" value="P:response to cold"/>
    <property type="evidence" value="ECO:0000314"/>
    <property type="project" value="MGI"/>
</dbReference>
<dbReference type="GO" id="GO:0006412">
    <property type="term" value="P:translation"/>
    <property type="evidence" value="ECO:0000314"/>
    <property type="project" value="MGI"/>
</dbReference>
<dbReference type="CDD" id="cd12449">
    <property type="entry name" value="RRM_CIRBP_RBM3"/>
    <property type="match status" value="1"/>
</dbReference>
<dbReference type="FunFam" id="3.30.70.330:FF:000312">
    <property type="entry name" value="RNA-binding protein 3 isoform X1"/>
    <property type="match status" value="1"/>
</dbReference>
<dbReference type="Gene3D" id="3.30.70.330">
    <property type="match status" value="1"/>
</dbReference>
<dbReference type="InterPro" id="IPR012677">
    <property type="entry name" value="Nucleotide-bd_a/b_plait_sf"/>
</dbReference>
<dbReference type="InterPro" id="IPR035979">
    <property type="entry name" value="RBD_domain_sf"/>
</dbReference>
<dbReference type="InterPro" id="IPR050441">
    <property type="entry name" value="RBM"/>
</dbReference>
<dbReference type="InterPro" id="IPR034278">
    <property type="entry name" value="RBM3/CIRBP_RRM"/>
</dbReference>
<dbReference type="InterPro" id="IPR000504">
    <property type="entry name" value="RRM_dom"/>
</dbReference>
<dbReference type="PANTHER" id="PTHR48034">
    <property type="entry name" value="TRANSFORMER-2 SEX-DETERMINING PROTEIN-RELATED"/>
    <property type="match status" value="1"/>
</dbReference>
<dbReference type="Pfam" id="PF00076">
    <property type="entry name" value="RRM_1"/>
    <property type="match status" value="1"/>
</dbReference>
<dbReference type="SMART" id="SM00360">
    <property type="entry name" value="RRM"/>
    <property type="match status" value="1"/>
</dbReference>
<dbReference type="SUPFAM" id="SSF54928">
    <property type="entry name" value="RNA-binding domain, RBD"/>
    <property type="match status" value="1"/>
</dbReference>
<dbReference type="PROSITE" id="PS50102">
    <property type="entry name" value="RRM"/>
    <property type="match status" value="1"/>
</dbReference>
<sequence>MSSEEGKLFVGGLNFNTDEQALEDHFSSFGPISEVVVVKDRETQRSRGFGFITFTNPEHASDAMRAMNGESLDGRQIRVDHAGKSARGSRGGAFGGRGRSYSRGGGDQGYGSGRYDSRPGGYGYGYGRSRDYSGSQGGYDRYSGGNYRDNYDN</sequence>
<evidence type="ECO:0000250" key="1"/>
<evidence type="ECO:0000250" key="2">
    <source>
        <dbReference type="UniProtKB" id="P98179"/>
    </source>
</evidence>
<evidence type="ECO:0000255" key="3">
    <source>
        <dbReference type="PROSITE-ProRule" id="PRU00176"/>
    </source>
</evidence>
<evidence type="ECO:0000256" key="4">
    <source>
        <dbReference type="SAM" id="MobiDB-lite"/>
    </source>
</evidence>
<evidence type="ECO:0000269" key="5">
    <source>
    </source>
</evidence>
<evidence type="ECO:0007744" key="6">
    <source>
    </source>
</evidence>
<evidence type="ECO:0007744" key="7">
    <source>
    </source>
</evidence>
<proteinExistence type="evidence at protein level"/>
<gene>
    <name type="primary">Rbm3</name>
</gene>
<organism>
    <name type="scientific">Mus musculus</name>
    <name type="common">Mouse</name>
    <dbReference type="NCBI Taxonomy" id="10090"/>
    <lineage>
        <taxon>Eukaryota</taxon>
        <taxon>Metazoa</taxon>
        <taxon>Chordata</taxon>
        <taxon>Craniata</taxon>
        <taxon>Vertebrata</taxon>
        <taxon>Euteleostomi</taxon>
        <taxon>Mammalia</taxon>
        <taxon>Eutheria</taxon>
        <taxon>Euarchontoglires</taxon>
        <taxon>Glires</taxon>
        <taxon>Rodentia</taxon>
        <taxon>Myomorpha</taxon>
        <taxon>Muroidea</taxon>
        <taxon>Muridae</taxon>
        <taxon>Murinae</taxon>
        <taxon>Mus</taxon>
        <taxon>Mus</taxon>
    </lineage>
</organism>
<comment type="function">
    <text evidence="5">Cold-inducible mRNA binding protein that enhances global protein synthesis at both physiological and mild hypothermic temperatures. Reduces the relative abundance of microRNAs, when overexpressed. Enhances phosphorylation of translation initiation factors and active polysome formation.</text>
</comment>
<comment type="subunit">
    <text>Interacts with RPL4. Associates with the 60S ribosomal subunits in an RNA-independent manner.</text>
</comment>
<comment type="subcellular location">
    <subcellularLocation>
        <location evidence="1">Nucleus</location>
    </subcellularLocation>
    <subcellularLocation>
        <location evidence="1">Cytoplasm</location>
    </subcellularLocation>
    <subcellularLocation>
        <location evidence="1">Cell projection</location>
        <location evidence="1">Dendrite</location>
    </subcellularLocation>
    <text evidence="1">Localizes in mRNA granules in dentrites.</text>
</comment>
<comment type="PTM">
    <text evidence="1">Arg-103 is dimethylated, probably to asymmetric dimethylarginine.</text>
</comment>
<comment type="PTM">
    <text evidence="1">Phosphorylated.</text>
</comment>
<name>RBM3_MOUSE</name>
<keyword id="KW-0966">Cell projection</keyword>
<keyword id="KW-0963">Cytoplasm</keyword>
<keyword id="KW-0488">Methylation</keyword>
<keyword id="KW-0539">Nucleus</keyword>
<keyword id="KW-0597">Phosphoprotein</keyword>
<keyword id="KW-1185">Reference proteome</keyword>
<keyword id="KW-0694">RNA-binding</keyword>
<keyword id="KW-0346">Stress response</keyword>